<reference key="1">
    <citation type="journal article" date="2009" name="Nature">
        <title>Evolution of pathogenicity and sexual reproduction in eight Candida genomes.</title>
        <authorList>
            <person name="Butler G."/>
            <person name="Rasmussen M.D."/>
            <person name="Lin M.F."/>
            <person name="Santos M.A.S."/>
            <person name="Sakthikumar S."/>
            <person name="Munro C.A."/>
            <person name="Rheinbay E."/>
            <person name="Grabherr M."/>
            <person name="Forche A."/>
            <person name="Reedy J.L."/>
            <person name="Agrafioti I."/>
            <person name="Arnaud M.B."/>
            <person name="Bates S."/>
            <person name="Brown A.J.P."/>
            <person name="Brunke S."/>
            <person name="Costanzo M.C."/>
            <person name="Fitzpatrick D.A."/>
            <person name="de Groot P.W.J."/>
            <person name="Harris D."/>
            <person name="Hoyer L.L."/>
            <person name="Hube B."/>
            <person name="Klis F.M."/>
            <person name="Kodira C."/>
            <person name="Lennard N."/>
            <person name="Logue M.E."/>
            <person name="Martin R."/>
            <person name="Neiman A.M."/>
            <person name="Nikolaou E."/>
            <person name="Quail M.A."/>
            <person name="Quinn J."/>
            <person name="Santos M.C."/>
            <person name="Schmitzberger F.F."/>
            <person name="Sherlock G."/>
            <person name="Shah P."/>
            <person name="Silverstein K.A.T."/>
            <person name="Skrzypek M.S."/>
            <person name="Soll D."/>
            <person name="Staggs R."/>
            <person name="Stansfield I."/>
            <person name="Stumpf M.P.H."/>
            <person name="Sudbery P.E."/>
            <person name="Srikantha T."/>
            <person name="Zeng Q."/>
            <person name="Berman J."/>
            <person name="Berriman M."/>
            <person name="Heitman J."/>
            <person name="Gow N.A.R."/>
            <person name="Lorenz M.C."/>
            <person name="Birren B.W."/>
            <person name="Kellis M."/>
            <person name="Cuomo C.A."/>
        </authorList>
    </citation>
    <scope>NUCLEOTIDE SEQUENCE [LARGE SCALE GENOMIC DNA]</scope>
    <source>
        <strain>WO-1</strain>
    </source>
</reference>
<evidence type="ECO:0000250" key="1"/>
<evidence type="ECO:0000255" key="2"/>
<evidence type="ECO:0000256" key="3">
    <source>
        <dbReference type="SAM" id="MobiDB-lite"/>
    </source>
</evidence>
<evidence type="ECO:0000305" key="4"/>
<gene>
    <name type="primary">EXO5</name>
    <name type="synonym">DEM1</name>
    <name type="ORF">CAWG_01684</name>
</gene>
<accession>C4YLG6</accession>
<feature type="transit peptide" description="Mitochondrion" evidence="2">
    <location>
        <begin position="1"/>
        <end status="unknown"/>
    </location>
</feature>
<feature type="chain" id="PRO_0000406684" description="Exonuclease V, mitochondrial">
    <location>
        <begin status="unknown"/>
        <end position="611"/>
    </location>
</feature>
<feature type="region of interest" description="Disordered" evidence="3">
    <location>
        <begin position="19"/>
        <end position="42"/>
    </location>
</feature>
<feature type="compositionally biased region" description="Basic and acidic residues" evidence="3">
    <location>
        <begin position="21"/>
        <end position="35"/>
    </location>
</feature>
<feature type="binding site" evidence="1">
    <location>
        <position position="147"/>
    </location>
    <ligand>
        <name>[4Fe-4S] cluster</name>
        <dbReference type="ChEBI" id="CHEBI:49883"/>
    </ligand>
</feature>
<feature type="binding site" evidence="1">
    <location>
        <position position="569"/>
    </location>
    <ligand>
        <name>[4Fe-4S] cluster</name>
        <dbReference type="ChEBI" id="CHEBI:49883"/>
    </ligand>
</feature>
<feature type="binding site" evidence="1">
    <location>
        <position position="572"/>
    </location>
    <ligand>
        <name>[4Fe-4S] cluster</name>
        <dbReference type="ChEBI" id="CHEBI:49883"/>
    </ligand>
</feature>
<feature type="binding site" evidence="1">
    <location>
        <position position="578"/>
    </location>
    <ligand>
        <name>[4Fe-4S] cluster</name>
        <dbReference type="ChEBI" id="CHEBI:49883"/>
    </ligand>
</feature>
<name>EXO5_CANAW</name>
<dbReference type="EC" id="3.1.-.-"/>
<dbReference type="EMBL" id="CM000309">
    <property type="protein sequence ID" value="EEQ43447.1"/>
    <property type="molecule type" value="Genomic_DNA"/>
</dbReference>
<dbReference type="PaxDb" id="5476-C4YLG6"/>
<dbReference type="VEuPathDB" id="FungiDB:CAWG_01684"/>
<dbReference type="HOGENOM" id="CLU_019985_0_0_1"/>
<dbReference type="OMA" id="LQVMYYR"/>
<dbReference type="OrthoDB" id="25138at766764"/>
<dbReference type="Proteomes" id="UP000001429">
    <property type="component" value="Chromosome R"/>
</dbReference>
<dbReference type="GO" id="GO:0005739">
    <property type="term" value="C:mitochondrion"/>
    <property type="evidence" value="ECO:0007669"/>
    <property type="project" value="UniProtKB-SubCell"/>
</dbReference>
<dbReference type="GO" id="GO:0005634">
    <property type="term" value="C:nucleus"/>
    <property type="evidence" value="ECO:0007669"/>
    <property type="project" value="TreeGrafter"/>
</dbReference>
<dbReference type="GO" id="GO:0051539">
    <property type="term" value="F:4 iron, 4 sulfur cluster binding"/>
    <property type="evidence" value="ECO:0007669"/>
    <property type="project" value="UniProtKB-KW"/>
</dbReference>
<dbReference type="GO" id="GO:0003677">
    <property type="term" value="F:DNA binding"/>
    <property type="evidence" value="ECO:0007669"/>
    <property type="project" value="UniProtKB-KW"/>
</dbReference>
<dbReference type="GO" id="GO:0046872">
    <property type="term" value="F:metal ion binding"/>
    <property type="evidence" value="ECO:0007669"/>
    <property type="project" value="UniProtKB-KW"/>
</dbReference>
<dbReference type="GO" id="GO:0045145">
    <property type="term" value="F:single-stranded DNA 5'-3' DNA exonuclease activity"/>
    <property type="evidence" value="ECO:0007669"/>
    <property type="project" value="InterPro"/>
</dbReference>
<dbReference type="GO" id="GO:0036297">
    <property type="term" value="P:interstrand cross-link repair"/>
    <property type="evidence" value="ECO:0007669"/>
    <property type="project" value="TreeGrafter"/>
</dbReference>
<dbReference type="InterPro" id="IPR019190">
    <property type="entry name" value="EXOV"/>
</dbReference>
<dbReference type="PANTHER" id="PTHR14464">
    <property type="entry name" value="EXONUCLEASE V"/>
    <property type="match status" value="1"/>
</dbReference>
<dbReference type="PANTHER" id="PTHR14464:SF4">
    <property type="entry name" value="EXONUCLEASE V"/>
    <property type="match status" value="1"/>
</dbReference>
<dbReference type="Pfam" id="PF09810">
    <property type="entry name" value="Exo5"/>
    <property type="match status" value="1"/>
</dbReference>
<organism>
    <name type="scientific">Candida albicans (strain WO-1)</name>
    <name type="common">Yeast</name>
    <dbReference type="NCBI Taxonomy" id="294748"/>
    <lineage>
        <taxon>Eukaryota</taxon>
        <taxon>Fungi</taxon>
        <taxon>Dikarya</taxon>
        <taxon>Ascomycota</taxon>
        <taxon>Saccharomycotina</taxon>
        <taxon>Pichiomycetes</taxon>
        <taxon>Debaryomycetaceae</taxon>
        <taxon>Candida/Lodderomyces clade</taxon>
        <taxon>Candida</taxon>
    </lineage>
</organism>
<proteinExistence type="inferred from homology"/>
<protein>
    <recommendedName>
        <fullName>Exonuclease V, mitochondrial</fullName>
        <shortName>Exo V</shortName>
        <ecNumber>3.1.-.-</ecNumber>
    </recommendedName>
    <alternativeName>
        <fullName>Defects in morphology protein 1</fullName>
    </alternativeName>
</protein>
<comment type="function">
    <text evidence="1">Single strand DNA specific 5'exonuclease involved in mitochondrial DNA replication and recombination. Releases dinucleotides as main products of catalysis. Has the capacity to slide across 5'double-stranded DNA or 5'RNA sequences and resumes cutting two nucleotides downstream of the double-stranded-to-single-stranded junction or RNA-to-DNA junction, respectively (By similarity).</text>
</comment>
<comment type="cofactor">
    <cofactor evidence="1">
        <name>Mg(2+)</name>
        <dbReference type="ChEBI" id="CHEBI:18420"/>
    </cofactor>
</comment>
<comment type="cofactor">
    <cofactor evidence="1">
        <name>[4Fe-4S] cluster</name>
        <dbReference type="ChEBI" id="CHEBI:49883"/>
    </cofactor>
    <text evidence="1">Binds 1 [4Fe-4S] cluster.</text>
</comment>
<comment type="subunit">
    <text evidence="1">Monomer.</text>
</comment>
<comment type="subcellular location">
    <subcellularLocation>
        <location evidence="1">Mitochondrion</location>
    </subcellularLocation>
</comment>
<comment type="similarity">
    <text evidence="4">Belongs to the EXO5 family.</text>
</comment>
<keyword id="KW-0004">4Fe-4S</keyword>
<keyword id="KW-0238">DNA-binding</keyword>
<keyword id="KW-0269">Exonuclease</keyword>
<keyword id="KW-0378">Hydrolase</keyword>
<keyword id="KW-0408">Iron</keyword>
<keyword id="KW-0411">Iron-sulfur</keyword>
<keyword id="KW-0460">Magnesium</keyword>
<keyword id="KW-0479">Metal-binding</keyword>
<keyword id="KW-0496">Mitochondrion</keyword>
<keyword id="KW-0540">Nuclease</keyword>
<keyword id="KW-0809">Transit peptide</keyword>
<sequence>MQRMRGKIFKNEPLVPMNVTSEHEQVQSISKEESRSLSSNDLNLSADSELQLESEPEIESEQLKNHEDVYEIIRSMVLATDTTLPRLSNNSLTGIYNHWKLNPNDDLPLYNPTKYIPYEFHSQYNQDRSYIITPRLSVTKLLVSSWCELRSFYQVYSGSVRLPSTKAMTQGTKLHSKLEAEIHPEIDTTEIEQFLISNAMSLRELQTTVPAEEETVVIDLGEVEQLAVDWAEMLIERLFSLIMGAEAREILLHGYLNLKNRSFVTNKDEIRESSSVLVSGIVDYIKFQNVTNPSDGTLFDDIHGFVDSAFDQVDNVPLVDLSQFLPEAKQILQNYDFRLTFTDVKTRSARQIPRQESVLEAAKFQTFYYRHFFHLLSRDSRFTYFSLIENAERRGHDVDKPLSILTTISLLRKHYHIFFKDFVKLANGEPIGFSPFDDSAKSIPYDFVSMFQSSDEFSLANPNHNHFLEQISAIDGIEYDSILSPLLKVWKTPPTLRYLAARASQLFNVFNENIGDITSVEYRYNKTSELLSEKVYDYNFSEFQAEVESASKFWNGEREVIPTEDLSRCSYCEFQSKCMVAGGKTTEAVEKKTIGPKIRQFLNECESSSKG</sequence>